<proteinExistence type="inferred from homology"/>
<feature type="chain" id="PRO_0000336764" description="ATP-dependent protease subunit HslV">
    <location>
        <begin position="1"/>
        <end position="181"/>
    </location>
</feature>
<feature type="active site" evidence="1">
    <location>
        <position position="7"/>
    </location>
</feature>
<feature type="binding site" evidence="1">
    <location>
        <position position="166"/>
    </location>
    <ligand>
        <name>Na(+)</name>
        <dbReference type="ChEBI" id="CHEBI:29101"/>
    </ligand>
</feature>
<feature type="binding site" evidence="1">
    <location>
        <position position="169"/>
    </location>
    <ligand>
        <name>Na(+)</name>
        <dbReference type="ChEBI" id="CHEBI:29101"/>
    </ligand>
</feature>
<feature type="binding site" evidence="1">
    <location>
        <position position="172"/>
    </location>
    <ligand>
        <name>Na(+)</name>
        <dbReference type="ChEBI" id="CHEBI:29101"/>
    </ligand>
</feature>
<protein>
    <recommendedName>
        <fullName evidence="1">ATP-dependent protease subunit HslV</fullName>
        <ecNumber evidence="1">3.4.25.2</ecNumber>
    </recommendedName>
</protein>
<sequence>MRPFHGTTVLCVRRDGKVVMASDGQVTLDKTVMKSTARKVRRLAEGAVLAGFAGATADAFQLFELFEKKLKEHARSLPRAAVELAKQWRTDRMLRRLEAMLVVADREHILVLSGAGDVIEPDPVPGGGVVAIGSGAPYAVAAARALLGHSALPARQVAEEAMKLAAEICIYTNANLTFEEL</sequence>
<organism>
    <name type="scientific">Anaeromyxobacter sp. (strain Fw109-5)</name>
    <dbReference type="NCBI Taxonomy" id="404589"/>
    <lineage>
        <taxon>Bacteria</taxon>
        <taxon>Pseudomonadati</taxon>
        <taxon>Myxococcota</taxon>
        <taxon>Myxococcia</taxon>
        <taxon>Myxococcales</taxon>
        <taxon>Cystobacterineae</taxon>
        <taxon>Anaeromyxobacteraceae</taxon>
        <taxon>Anaeromyxobacter</taxon>
    </lineage>
</organism>
<reference key="1">
    <citation type="journal article" date="2015" name="Genome Announc.">
        <title>Complete genome sequence of Anaeromyxobacter sp. Fw109-5, an anaerobic, metal-reducing bacterium isolated from a contaminated subsurface environment.</title>
        <authorList>
            <person name="Hwang C."/>
            <person name="Copeland A."/>
            <person name="Lucas S."/>
            <person name="Lapidus A."/>
            <person name="Barry K."/>
            <person name="Glavina Del Rio T."/>
            <person name="Dalin E."/>
            <person name="Tice H."/>
            <person name="Pitluck S."/>
            <person name="Sims D."/>
            <person name="Brettin T."/>
            <person name="Bruce D.C."/>
            <person name="Detter J.C."/>
            <person name="Han C.S."/>
            <person name="Schmutz J."/>
            <person name="Larimer F.W."/>
            <person name="Land M.L."/>
            <person name="Hauser L.J."/>
            <person name="Kyrpides N."/>
            <person name="Lykidis A."/>
            <person name="Richardson P."/>
            <person name="Belieav A."/>
            <person name="Sanford R.A."/>
            <person name="Loeffler F.E."/>
            <person name="Fields M.W."/>
        </authorList>
    </citation>
    <scope>NUCLEOTIDE SEQUENCE [LARGE SCALE GENOMIC DNA]</scope>
    <source>
        <strain>Fw109-5</strain>
    </source>
</reference>
<evidence type="ECO:0000255" key="1">
    <source>
        <dbReference type="HAMAP-Rule" id="MF_00248"/>
    </source>
</evidence>
<comment type="function">
    <text evidence="1">Protease subunit of a proteasome-like degradation complex believed to be a general protein degrading machinery.</text>
</comment>
<comment type="catalytic activity">
    <reaction evidence="1">
        <text>ATP-dependent cleavage of peptide bonds with broad specificity.</text>
        <dbReference type="EC" id="3.4.25.2"/>
    </reaction>
</comment>
<comment type="activity regulation">
    <text evidence="1">Allosterically activated by HslU binding.</text>
</comment>
<comment type="subunit">
    <text evidence="1">A double ring-shaped homohexamer of HslV is capped on each side by a ring-shaped HslU homohexamer. The assembly of the HslU/HslV complex is dependent on binding of ATP.</text>
</comment>
<comment type="subcellular location">
    <subcellularLocation>
        <location evidence="1">Cytoplasm</location>
    </subcellularLocation>
</comment>
<comment type="similarity">
    <text evidence="1">Belongs to the peptidase T1B family. HslV subfamily.</text>
</comment>
<name>HSLV_ANADF</name>
<accession>A7HDU3</accession>
<keyword id="KW-0021">Allosteric enzyme</keyword>
<keyword id="KW-0963">Cytoplasm</keyword>
<keyword id="KW-0378">Hydrolase</keyword>
<keyword id="KW-0479">Metal-binding</keyword>
<keyword id="KW-0645">Protease</keyword>
<keyword id="KW-1185">Reference proteome</keyword>
<keyword id="KW-0915">Sodium</keyword>
<keyword id="KW-0888">Threonine protease</keyword>
<dbReference type="EC" id="3.4.25.2" evidence="1"/>
<dbReference type="EMBL" id="CP000769">
    <property type="protein sequence ID" value="ABS26889.1"/>
    <property type="molecule type" value="Genomic_DNA"/>
</dbReference>
<dbReference type="RefSeq" id="WP_012097490.1">
    <property type="nucleotide sequence ID" value="NC_009675.1"/>
</dbReference>
<dbReference type="SMR" id="A7HDU3"/>
<dbReference type="STRING" id="404589.Anae109_2688"/>
<dbReference type="MEROPS" id="T01.006"/>
<dbReference type="KEGG" id="afw:Anae109_2688"/>
<dbReference type="eggNOG" id="COG5405">
    <property type="taxonomic scope" value="Bacteria"/>
</dbReference>
<dbReference type="HOGENOM" id="CLU_093872_1_0_7"/>
<dbReference type="OrthoDB" id="9804884at2"/>
<dbReference type="Proteomes" id="UP000006382">
    <property type="component" value="Chromosome"/>
</dbReference>
<dbReference type="GO" id="GO:0009376">
    <property type="term" value="C:HslUV protease complex"/>
    <property type="evidence" value="ECO:0007669"/>
    <property type="project" value="UniProtKB-UniRule"/>
</dbReference>
<dbReference type="GO" id="GO:0005839">
    <property type="term" value="C:proteasome core complex"/>
    <property type="evidence" value="ECO:0007669"/>
    <property type="project" value="InterPro"/>
</dbReference>
<dbReference type="GO" id="GO:0046872">
    <property type="term" value="F:metal ion binding"/>
    <property type="evidence" value="ECO:0007669"/>
    <property type="project" value="UniProtKB-KW"/>
</dbReference>
<dbReference type="GO" id="GO:0004298">
    <property type="term" value="F:threonine-type endopeptidase activity"/>
    <property type="evidence" value="ECO:0007669"/>
    <property type="project" value="UniProtKB-KW"/>
</dbReference>
<dbReference type="GO" id="GO:0051603">
    <property type="term" value="P:proteolysis involved in protein catabolic process"/>
    <property type="evidence" value="ECO:0007669"/>
    <property type="project" value="InterPro"/>
</dbReference>
<dbReference type="CDD" id="cd01913">
    <property type="entry name" value="protease_HslV"/>
    <property type="match status" value="1"/>
</dbReference>
<dbReference type="Gene3D" id="3.60.20.10">
    <property type="entry name" value="Glutamine Phosphoribosylpyrophosphate, subunit 1, domain 1"/>
    <property type="match status" value="1"/>
</dbReference>
<dbReference type="HAMAP" id="MF_00248">
    <property type="entry name" value="HslV"/>
    <property type="match status" value="1"/>
</dbReference>
<dbReference type="InterPro" id="IPR022281">
    <property type="entry name" value="ATP-dep_Prtase_HsIV_su"/>
</dbReference>
<dbReference type="InterPro" id="IPR029055">
    <property type="entry name" value="Ntn_hydrolases_N"/>
</dbReference>
<dbReference type="InterPro" id="IPR001353">
    <property type="entry name" value="Proteasome_sua/b"/>
</dbReference>
<dbReference type="InterPro" id="IPR023333">
    <property type="entry name" value="Proteasome_suB-type"/>
</dbReference>
<dbReference type="NCBIfam" id="TIGR03692">
    <property type="entry name" value="ATP_dep_HslV"/>
    <property type="match status" value="1"/>
</dbReference>
<dbReference type="NCBIfam" id="NF003964">
    <property type="entry name" value="PRK05456.1"/>
    <property type="match status" value="1"/>
</dbReference>
<dbReference type="PANTHER" id="PTHR32194:SF0">
    <property type="entry name" value="ATP-DEPENDENT PROTEASE SUBUNIT HSLV"/>
    <property type="match status" value="1"/>
</dbReference>
<dbReference type="PANTHER" id="PTHR32194">
    <property type="entry name" value="METALLOPROTEASE TLDD"/>
    <property type="match status" value="1"/>
</dbReference>
<dbReference type="Pfam" id="PF00227">
    <property type="entry name" value="Proteasome"/>
    <property type="match status" value="1"/>
</dbReference>
<dbReference type="PIRSF" id="PIRSF039093">
    <property type="entry name" value="HslV"/>
    <property type="match status" value="1"/>
</dbReference>
<dbReference type="SUPFAM" id="SSF56235">
    <property type="entry name" value="N-terminal nucleophile aminohydrolases (Ntn hydrolases)"/>
    <property type="match status" value="1"/>
</dbReference>
<dbReference type="PROSITE" id="PS51476">
    <property type="entry name" value="PROTEASOME_BETA_2"/>
    <property type="match status" value="1"/>
</dbReference>
<gene>
    <name evidence="1" type="primary">hslV</name>
    <name type="ordered locus">Anae109_2688</name>
</gene>